<keyword id="KW-0044">Antibiotic</keyword>
<keyword id="KW-0929">Antimicrobial</keyword>
<keyword id="KW-0078">Bacteriocin</keyword>
<keyword id="KW-0903">Direct protein sequencing</keyword>
<keyword id="KW-1015">Disulfide bond</keyword>
<keyword id="KW-0964">Secreted</keyword>
<accession>P86386</accession>
<evidence type="ECO:0000250" key="1">
    <source>
        <dbReference type="UniProtKB" id="P29430"/>
    </source>
</evidence>
<evidence type="ECO:0000255" key="2"/>
<evidence type="ECO:0000269" key="3">
    <source>
    </source>
</evidence>
<evidence type="ECO:0000305" key="4">
    <source>
    </source>
</evidence>
<comment type="function">
    <text evidence="3">Bactericidal activity against a wide range of pathogenic bacteria, including Bacillus spp., Enterococcus spp., Listeria spp., Staphylococcus spp. and Streptococcus spp (PubMed:21477375). Has no activity against Lactobacillus salivarius, Staphylococcus aureus, Streptococcus pyogenes and Streptococcus suis (PubMed:21477375).</text>
</comment>
<comment type="subcellular location">
    <subcellularLocation>
        <location evidence="1">Secreted</location>
    </subcellularLocation>
</comment>
<comment type="mass spectrometry"/>
<comment type="similarity">
    <text evidence="2">Belongs to the bacteriocin class IIA/YGNGV family.</text>
</comment>
<name>BACT_STRMG</name>
<protein>
    <recommendedName>
        <fullName>Bacteriocin mutacin F-59.1</fullName>
    </recommendedName>
</protein>
<dbReference type="GO" id="GO:0005576">
    <property type="term" value="C:extracellular region"/>
    <property type="evidence" value="ECO:0007669"/>
    <property type="project" value="UniProtKB-SubCell"/>
</dbReference>
<dbReference type="GO" id="GO:0042742">
    <property type="term" value="P:defense response to bacterium"/>
    <property type="evidence" value="ECO:0007669"/>
    <property type="project" value="UniProtKB-KW"/>
</dbReference>
<dbReference type="GO" id="GO:0031640">
    <property type="term" value="P:killing of cells of another organism"/>
    <property type="evidence" value="ECO:0007669"/>
    <property type="project" value="UniProtKB-KW"/>
</dbReference>
<dbReference type="Gene3D" id="1.20.5.130">
    <property type="match status" value="1"/>
</dbReference>
<dbReference type="InterPro" id="IPR002633">
    <property type="entry name" value="Bacteriocin_IIa"/>
</dbReference>
<dbReference type="InterPro" id="IPR023388">
    <property type="entry name" value="Bacteriocin_IIa_dom_sf"/>
</dbReference>
<dbReference type="Pfam" id="PF01721">
    <property type="entry name" value="Bacteriocin_II"/>
    <property type="match status" value="1"/>
</dbReference>
<reference key="1">
    <citation type="journal article" date="2011" name="BMC Microbiol.">
        <title>Production, purification, sequencing and activity spectra of mutacins D-123.1 and F-59.1.</title>
        <authorList>
            <person name="Nicolas G.G."/>
            <person name="LaPointe G."/>
            <person name="Lavoie M.C."/>
        </authorList>
    </citation>
    <scope>PROTEIN SEQUENCE</scope>
    <scope>FUNCTION</scope>
    <scope>MASS SPECTROMETRY</scope>
    <source>
        <strain evidence="3">59.1</strain>
    </source>
</reference>
<proteinExistence type="evidence at protein level"/>
<sequence>KYYGNGVTCGKHSXSVDWSKATTNI</sequence>
<organism>
    <name type="scientific">Streptococcus mutans</name>
    <dbReference type="NCBI Taxonomy" id="1309"/>
    <lineage>
        <taxon>Bacteria</taxon>
        <taxon>Bacillati</taxon>
        <taxon>Bacillota</taxon>
        <taxon>Bacilli</taxon>
        <taxon>Lactobacillales</taxon>
        <taxon>Streptococcaceae</taxon>
        <taxon>Streptococcus</taxon>
    </lineage>
</organism>
<feature type="chain" id="PRO_0000392471" description="Bacteriocin mutacin F-59.1">
    <location>
        <begin position="1"/>
        <end position="25"/>
    </location>
</feature>
<feature type="disulfide bond" evidence="1">
    <location>
        <begin position="9"/>
        <end position="14"/>
    </location>
</feature>
<feature type="unsure residue" description="Assigned by similarity to orthologs" evidence="4">
    <location>
        <position position="14"/>
    </location>
</feature>
<feature type="unsure residue" description="Assigned by similarity to orthologs" evidence="4">
    <location>
        <position position="19"/>
    </location>
</feature>
<feature type="unsure residue" description="Assigned by similarity to orthologs" evidence="4">
    <location>
        <position position="21"/>
    </location>
</feature>
<feature type="unsure residue" description="Assigned by similarity to orthologs" evidence="4">
    <location>
        <begin position="23"/>
        <end position="25"/>
    </location>
</feature>